<keyword id="KW-0963">Cytoplasm</keyword>
<keyword id="KW-0648">Protein biosynthesis</keyword>
<reference key="1">
    <citation type="journal article" date="2007" name="Genome Res.">
        <title>Genome characteristics of facultatively symbiotic Frankia sp. strains reflect host range and host plant biogeography.</title>
        <authorList>
            <person name="Normand P."/>
            <person name="Lapierre P."/>
            <person name="Tisa L.S."/>
            <person name="Gogarten J.P."/>
            <person name="Alloisio N."/>
            <person name="Bagnarol E."/>
            <person name="Bassi C.A."/>
            <person name="Berry A.M."/>
            <person name="Bickhart D.M."/>
            <person name="Choisne N."/>
            <person name="Couloux A."/>
            <person name="Cournoyer B."/>
            <person name="Cruveiller S."/>
            <person name="Daubin V."/>
            <person name="Demange N."/>
            <person name="Francino M.P."/>
            <person name="Goltsman E."/>
            <person name="Huang Y."/>
            <person name="Kopp O.R."/>
            <person name="Labarre L."/>
            <person name="Lapidus A."/>
            <person name="Lavire C."/>
            <person name="Marechal J."/>
            <person name="Martinez M."/>
            <person name="Mastronunzio J.E."/>
            <person name="Mullin B.C."/>
            <person name="Niemann J."/>
            <person name="Pujic P."/>
            <person name="Rawnsley T."/>
            <person name="Rouy Z."/>
            <person name="Schenowitz C."/>
            <person name="Sellstedt A."/>
            <person name="Tavares F."/>
            <person name="Tomkins J.P."/>
            <person name="Vallenet D."/>
            <person name="Valverde C."/>
            <person name="Wall L.G."/>
            <person name="Wang Y."/>
            <person name="Medigue C."/>
            <person name="Benson D.R."/>
        </authorList>
    </citation>
    <scope>NUCLEOTIDE SEQUENCE [LARGE SCALE GENOMIC DNA]</scope>
    <source>
        <strain>EAN1pec</strain>
    </source>
</reference>
<feature type="chain" id="PRO_1000090743" description="Ribosome-recycling factor">
    <location>
        <begin position="1"/>
        <end position="185"/>
    </location>
</feature>
<sequence>MIDDTLLEAEEKMDKAVSVAKDDFANIRTGRITPAVFGKVLVDYYGAPTPVQQLASFHIPEPRMVIITPYDKSSLGAVEKAVRDSDLGVNPSNDGTIIRCVFPELSEQRRRDLVKVARTKAEEARVSIRNIRRHAKDAIDRIVRDGEAGEDEGRRGEKDLDEATHRYVSQVDELLRIKESDLLSV</sequence>
<protein>
    <recommendedName>
        <fullName evidence="1">Ribosome-recycling factor</fullName>
        <shortName evidence="1">RRF</shortName>
    </recommendedName>
    <alternativeName>
        <fullName evidence="1">Ribosome-releasing factor</fullName>
    </alternativeName>
</protein>
<organism>
    <name type="scientific">Parafrankia sp. (strain EAN1pec)</name>
    <dbReference type="NCBI Taxonomy" id="298653"/>
    <lineage>
        <taxon>Bacteria</taxon>
        <taxon>Bacillati</taxon>
        <taxon>Actinomycetota</taxon>
        <taxon>Actinomycetes</taxon>
        <taxon>Frankiales</taxon>
        <taxon>Frankiaceae</taxon>
        <taxon>Parafrankia</taxon>
    </lineage>
</organism>
<evidence type="ECO:0000255" key="1">
    <source>
        <dbReference type="HAMAP-Rule" id="MF_00040"/>
    </source>
</evidence>
<gene>
    <name evidence="1" type="primary">frr</name>
    <name type="ordered locus">Franean1_1164</name>
</gene>
<name>RRF_PARS2</name>
<proteinExistence type="inferred from homology"/>
<comment type="function">
    <text evidence="1">Responsible for the release of ribosomes from messenger RNA at the termination of protein biosynthesis. May increase the efficiency of translation by recycling ribosomes from one round of translation to another.</text>
</comment>
<comment type="subcellular location">
    <subcellularLocation>
        <location evidence="1">Cytoplasm</location>
    </subcellularLocation>
</comment>
<comment type="similarity">
    <text evidence="1">Belongs to the RRF family.</text>
</comment>
<dbReference type="EMBL" id="CP000820">
    <property type="protein sequence ID" value="ABW10618.1"/>
    <property type="molecule type" value="Genomic_DNA"/>
</dbReference>
<dbReference type="RefSeq" id="WP_020458794.1">
    <property type="nucleotide sequence ID" value="NC_009921.1"/>
</dbReference>
<dbReference type="SMR" id="A8L6D6"/>
<dbReference type="STRING" id="298653.Franean1_1164"/>
<dbReference type="KEGG" id="fre:Franean1_1164"/>
<dbReference type="eggNOG" id="COG0233">
    <property type="taxonomic scope" value="Bacteria"/>
</dbReference>
<dbReference type="HOGENOM" id="CLU_073981_2_0_11"/>
<dbReference type="GO" id="GO:0005737">
    <property type="term" value="C:cytoplasm"/>
    <property type="evidence" value="ECO:0007669"/>
    <property type="project" value="UniProtKB-SubCell"/>
</dbReference>
<dbReference type="GO" id="GO:0043023">
    <property type="term" value="F:ribosomal large subunit binding"/>
    <property type="evidence" value="ECO:0007669"/>
    <property type="project" value="TreeGrafter"/>
</dbReference>
<dbReference type="GO" id="GO:0006415">
    <property type="term" value="P:translational termination"/>
    <property type="evidence" value="ECO:0007669"/>
    <property type="project" value="UniProtKB-UniRule"/>
</dbReference>
<dbReference type="CDD" id="cd00520">
    <property type="entry name" value="RRF"/>
    <property type="match status" value="1"/>
</dbReference>
<dbReference type="FunFam" id="1.10.132.20:FF:000001">
    <property type="entry name" value="Ribosome-recycling factor"/>
    <property type="match status" value="1"/>
</dbReference>
<dbReference type="FunFam" id="3.30.1360.40:FF:000001">
    <property type="entry name" value="Ribosome-recycling factor"/>
    <property type="match status" value="1"/>
</dbReference>
<dbReference type="Gene3D" id="3.30.1360.40">
    <property type="match status" value="1"/>
</dbReference>
<dbReference type="Gene3D" id="1.10.132.20">
    <property type="entry name" value="Ribosome-recycling factor"/>
    <property type="match status" value="1"/>
</dbReference>
<dbReference type="HAMAP" id="MF_00040">
    <property type="entry name" value="RRF"/>
    <property type="match status" value="1"/>
</dbReference>
<dbReference type="InterPro" id="IPR002661">
    <property type="entry name" value="Ribosome_recyc_fac"/>
</dbReference>
<dbReference type="InterPro" id="IPR023584">
    <property type="entry name" value="Ribosome_recyc_fac_dom"/>
</dbReference>
<dbReference type="InterPro" id="IPR036191">
    <property type="entry name" value="RRF_sf"/>
</dbReference>
<dbReference type="NCBIfam" id="TIGR00496">
    <property type="entry name" value="frr"/>
    <property type="match status" value="1"/>
</dbReference>
<dbReference type="PANTHER" id="PTHR20982:SF3">
    <property type="entry name" value="MITOCHONDRIAL RIBOSOME RECYCLING FACTOR PSEUDO 1"/>
    <property type="match status" value="1"/>
</dbReference>
<dbReference type="PANTHER" id="PTHR20982">
    <property type="entry name" value="RIBOSOME RECYCLING FACTOR"/>
    <property type="match status" value="1"/>
</dbReference>
<dbReference type="Pfam" id="PF01765">
    <property type="entry name" value="RRF"/>
    <property type="match status" value="1"/>
</dbReference>
<dbReference type="SUPFAM" id="SSF55194">
    <property type="entry name" value="Ribosome recycling factor, RRF"/>
    <property type="match status" value="1"/>
</dbReference>
<accession>A8L6D6</accession>